<gene>
    <name evidence="7" type="primary">prhN</name>
</gene>
<reference key="1">
    <citation type="journal article" date="2016" name="J. Am. Chem. Soc.">
        <title>Discovery of key dioxygenases that diverged the paraherquonin and acetoxydehydroaustin pathways in Penicillium brasilianum.</title>
        <authorList>
            <person name="Matsuda Y."/>
            <person name="Iwabuchi T."/>
            <person name="Fujimoto T."/>
            <person name="Awakawa T."/>
            <person name="Nakashima Y."/>
            <person name="Mori T."/>
            <person name="Zhang H."/>
            <person name="Hayashi F."/>
            <person name="Abe I."/>
        </authorList>
    </citation>
    <scope>NUCLEOTIDE SEQUENCE [GENOMIC DNA]</scope>
    <scope>FUNCTION</scope>
    <scope>PATHWAY</scope>
    <source>
        <strain>ATCC 22354 / NBRC 6234 / CBS 338.59 / FRR 3454 / IMI 68220</strain>
    </source>
</reference>
<reference key="2">
    <citation type="journal article" date="2017" name="Nat. Chem. Biol.">
        <title>Molecular basis for the unusual ring reconstruction in fungal meroterpenoid biogenesis.</title>
        <authorList>
            <person name="Mori T."/>
            <person name="Iwabuchi T."/>
            <person name="Hoshino S."/>
            <person name="Wang H."/>
            <person name="Matsuda Y."/>
            <person name="Abe I."/>
        </authorList>
    </citation>
    <scope>FUNCTION</scope>
</reference>
<reference key="3">
    <citation type="journal article" date="2018" name="Nat. Commun.">
        <title>Structure function and engineering of multifunctional non-heme iron dependent oxygenases in fungal meroterpenoid biosynthesis.</title>
        <authorList>
            <person name="Nakashima Y."/>
            <person name="Mori T."/>
            <person name="Nakamura H."/>
            <person name="Awakawa T."/>
            <person name="Hoshino S."/>
            <person name="Senda M."/>
            <person name="Senda T."/>
            <person name="Abe I."/>
        </authorList>
    </citation>
    <scope>FUNCTION</scope>
</reference>
<organism>
    <name type="scientific">Penicillium brasilianum</name>
    <dbReference type="NCBI Taxonomy" id="104259"/>
    <lineage>
        <taxon>Eukaryota</taxon>
        <taxon>Fungi</taxon>
        <taxon>Dikarya</taxon>
        <taxon>Ascomycota</taxon>
        <taxon>Pezizomycotina</taxon>
        <taxon>Eurotiomycetes</taxon>
        <taxon>Eurotiomycetidae</taxon>
        <taxon>Eurotiales</taxon>
        <taxon>Aspergillaceae</taxon>
        <taxon>Penicillium</taxon>
    </lineage>
</organism>
<dbReference type="EC" id="1.-.-.-" evidence="9"/>
<dbReference type="EMBL" id="LC127182">
    <property type="protein sequence ID" value="BAV69315.1"/>
    <property type="molecule type" value="Genomic_DNA"/>
</dbReference>
<dbReference type="SMR" id="A0A1E1FFN3"/>
<dbReference type="GlyCosmos" id="A0A1E1FFN3">
    <property type="glycosylation" value="2 sites, No reported glycans"/>
</dbReference>
<dbReference type="UniPathway" id="UPA00213"/>
<dbReference type="GO" id="GO:0016020">
    <property type="term" value="C:membrane"/>
    <property type="evidence" value="ECO:0007669"/>
    <property type="project" value="UniProtKB-SubCell"/>
</dbReference>
<dbReference type="GO" id="GO:0020037">
    <property type="term" value="F:heme binding"/>
    <property type="evidence" value="ECO:0007669"/>
    <property type="project" value="InterPro"/>
</dbReference>
<dbReference type="GO" id="GO:0005506">
    <property type="term" value="F:iron ion binding"/>
    <property type="evidence" value="ECO:0007669"/>
    <property type="project" value="InterPro"/>
</dbReference>
<dbReference type="GO" id="GO:0004497">
    <property type="term" value="F:monooxygenase activity"/>
    <property type="evidence" value="ECO:0007669"/>
    <property type="project" value="UniProtKB-KW"/>
</dbReference>
<dbReference type="GO" id="GO:0016705">
    <property type="term" value="F:oxidoreductase activity, acting on paired donors, with incorporation or reduction of molecular oxygen"/>
    <property type="evidence" value="ECO:0007669"/>
    <property type="project" value="InterPro"/>
</dbReference>
<dbReference type="GO" id="GO:0043386">
    <property type="term" value="P:mycotoxin biosynthetic process"/>
    <property type="evidence" value="ECO:0007669"/>
    <property type="project" value="UniProtKB-ARBA"/>
</dbReference>
<dbReference type="GO" id="GO:0016114">
    <property type="term" value="P:terpenoid biosynthetic process"/>
    <property type="evidence" value="ECO:0007669"/>
    <property type="project" value="UniProtKB-UniPathway"/>
</dbReference>
<dbReference type="CDD" id="cd11041">
    <property type="entry name" value="CYP503A1-like"/>
    <property type="match status" value="1"/>
</dbReference>
<dbReference type="Gene3D" id="1.10.630.10">
    <property type="entry name" value="Cytochrome P450"/>
    <property type="match status" value="1"/>
</dbReference>
<dbReference type="InterPro" id="IPR001128">
    <property type="entry name" value="Cyt_P450"/>
</dbReference>
<dbReference type="InterPro" id="IPR017972">
    <property type="entry name" value="Cyt_P450_CS"/>
</dbReference>
<dbReference type="InterPro" id="IPR002403">
    <property type="entry name" value="Cyt_P450_E_grp-IV"/>
</dbReference>
<dbReference type="InterPro" id="IPR036396">
    <property type="entry name" value="Cyt_P450_sf"/>
</dbReference>
<dbReference type="PANTHER" id="PTHR46206">
    <property type="entry name" value="CYTOCHROME P450"/>
    <property type="match status" value="1"/>
</dbReference>
<dbReference type="PANTHER" id="PTHR46206:SF2">
    <property type="entry name" value="CYTOCHROME P450 MONOOXYGENASE AUSG-RELATED"/>
    <property type="match status" value="1"/>
</dbReference>
<dbReference type="Pfam" id="PF00067">
    <property type="entry name" value="p450"/>
    <property type="match status" value="1"/>
</dbReference>
<dbReference type="PRINTS" id="PR00465">
    <property type="entry name" value="EP450IV"/>
</dbReference>
<dbReference type="SUPFAM" id="SSF48264">
    <property type="entry name" value="Cytochrome P450"/>
    <property type="match status" value="1"/>
</dbReference>
<dbReference type="PROSITE" id="PS00086">
    <property type="entry name" value="CYTOCHROME_P450"/>
    <property type="match status" value="1"/>
</dbReference>
<keyword id="KW-0175">Coiled coil</keyword>
<keyword id="KW-0325">Glycoprotein</keyword>
<keyword id="KW-0349">Heme</keyword>
<keyword id="KW-0408">Iron</keyword>
<keyword id="KW-0472">Membrane</keyword>
<keyword id="KW-0479">Metal-binding</keyword>
<keyword id="KW-0503">Monooxygenase</keyword>
<keyword id="KW-0560">Oxidoreductase</keyword>
<keyword id="KW-0812">Transmembrane</keyword>
<keyword id="KW-1133">Transmembrane helix</keyword>
<name>PRHN_PENBI</name>
<feature type="chain" id="PRO_0000449165" description="Cytochrome P450 monooxygenase prhN">
    <location>
        <begin position="1"/>
        <end position="502"/>
    </location>
</feature>
<feature type="transmembrane region" description="Helical" evidence="3">
    <location>
        <begin position="14"/>
        <end position="30"/>
    </location>
</feature>
<feature type="binding site" description="axial binding residue" evidence="1">
    <location>
        <position position="443"/>
    </location>
    <ligand>
        <name>heme</name>
        <dbReference type="ChEBI" id="CHEBI:30413"/>
    </ligand>
    <ligandPart>
        <name>Fe</name>
        <dbReference type="ChEBI" id="CHEBI:18248"/>
    </ligandPart>
</feature>
<feature type="glycosylation site" description="N-linked (GlcNAc...) asparagine" evidence="4">
    <location>
        <position position="165"/>
    </location>
</feature>
<feature type="glycosylation site" description="N-linked (GlcNAc...) asparagine" evidence="4">
    <location>
        <position position="474"/>
    </location>
</feature>
<proteinExistence type="inferred from homology"/>
<accession>A0A1E1FFN3</accession>
<comment type="function">
    <text evidence="2 5 6 9 10 11">Cytochrome P450 monooxygenase; part of the gene cluster that mediates the biosynthesis of paraherquonin, a meroterpenoid with a unique, highly congested hexacyclic molecular architecture (PubMed:27602587). The first step of the pathway is the synthesis of 3,5-dimethylorsellinic acid (DMOA) by the polyketide synthase prhL (By similarity). Synthesis of DMOA is followed by farnesylation by the prenyltransferase prhE, methylesterification by the methyl-transferase prhM, epoxidation of the prenyl chain by the flavin-dependent monooxygenase prhF, and cyclization of the farnesyl moiety by the terpene cyclase prhH, to yield the tetracyclic intermediate, protoaustinoid A (By similarity). The short chain dehydrogenase prhI then oxidizes the C-3 alcohol group of the terpene cyclase product to transform protoaustinoid A into protoaustinoid B (PubMed:27602587). The FAD-binding monooxygenase prhJ catalyzes the oxidation of protoaustinoid B into preaustinoid A which is further oxidized into preaustinoid A1 by FAD-binding monooxygenase phrK (PubMed:27602587). Finally, prhA leads to berkeleydione via the berkeleyone B intermediate (PubMed:27602587, PubMed:29317628). PrhA is a multifunctional dioxygenase that first desaturates at C5-C6 to form berkeleyone B, followed by rearrangement of the A/B-ring to form the cycloheptadiene moiety in berkeleydione (PubMed:27602587, PubMed:29317628). Berkeleydione serves as the key intermediate for the biosynthesis of paraherquonin as well as many other meroterpenoids (Probable). The cytochrome P450 monooxygenases prhB, prhD, and prhN, as well as the isomerase prhC, are probably involved in the late stage of paraherquonin biosynthesis, after the production of berkeleydione (Probable). Especially prhC might be a multifunctional enzyme that catalyzes the D-ring expansion via intramolecular methoxy rearrangement, as well as the hydrolysis of the expanded D-ring (Probable).</text>
</comment>
<comment type="cofactor">
    <cofactor evidence="1">
        <name>heme</name>
        <dbReference type="ChEBI" id="CHEBI:30413"/>
    </cofactor>
</comment>
<comment type="pathway">
    <text evidence="9">Secondary metabolite biosynthesis; terpenoid biosynthesis.</text>
</comment>
<comment type="subcellular location">
    <subcellularLocation>
        <location evidence="3">Membrane</location>
        <topology evidence="3">Single-pass membrane protein</topology>
    </subcellularLocation>
</comment>
<comment type="similarity">
    <text evidence="8">Belongs to the cytochrome P450 family.</text>
</comment>
<sequence length="502" mass="56499">MLSILFDDPARTSSGALLIVGILLLRWALWPAPSSHWPLVNGKRWFEITTTKSKDRFVANGKDILLSSFKRLSKGFRLGTDNGPMIILSPEYVDEFRSEDRLCPVKFQAELAHTHLPGFEILSDKHVPKSVFTDFILRKLTPAIDSTAPASVTRLREALESTWTNSSEWHQIDLHSSVQVLSHTTTSPIFVGPELSSSKAWEELTYRYVGNFPVVACSLRLWPKFSQRFVNMILPSCTSLRKDVNQARQMVNEVLQKRAASQAARISQGLEPEKFSDGLQWWQELSGPPCDPACLQLALIFSAVHSTVDLLSQTILNLAERPELVDELRQEIIAVRESQPWGKAAFYKLGLMDSVLKETQRLKPVSIATEDVTFSDGLVIPKGSLVMMSCHNMREDSVTYPNPLEFDGHRFRKMRESPTNGAMAHLVSSSQHHMGFGIGTHSCPGRFFIAAGLKLTLSQILLNYDLRLSDPSENVTQNQGLFLMPNFKAKVEVRRREPEIEL</sequence>
<evidence type="ECO:0000250" key="1">
    <source>
        <dbReference type="UniProtKB" id="P04798"/>
    </source>
</evidence>
<evidence type="ECO:0000250" key="2">
    <source>
        <dbReference type="UniProtKB" id="Q5ATJ7"/>
    </source>
</evidence>
<evidence type="ECO:0000255" key="3"/>
<evidence type="ECO:0000255" key="4">
    <source>
        <dbReference type="PROSITE-ProRule" id="PRU00498"/>
    </source>
</evidence>
<evidence type="ECO:0000269" key="5">
    <source>
    </source>
</evidence>
<evidence type="ECO:0000269" key="6">
    <source>
    </source>
</evidence>
<evidence type="ECO:0000303" key="7">
    <source>
    </source>
</evidence>
<evidence type="ECO:0000305" key="8"/>
<evidence type="ECO:0000305" key="9">
    <source>
    </source>
</evidence>
<evidence type="ECO:0000305" key="10">
    <source>
    </source>
</evidence>
<evidence type="ECO:0000305" key="11">
    <source>
    </source>
</evidence>
<protein>
    <recommendedName>
        <fullName evidence="7">Cytochrome P450 monooxygenase prhN</fullName>
        <ecNumber evidence="9">1.-.-.-</ecNumber>
    </recommendedName>
    <alternativeName>
        <fullName evidence="7">Paraherquonin biosynthesis cluster protein N</fullName>
    </alternativeName>
</protein>